<protein>
    <recommendedName>
        <fullName>ADP-ribosylation factor GTPase-activating protein AGD7</fullName>
        <shortName>ARF GAP AGD7</shortName>
    </recommendedName>
    <alternativeName>
        <fullName>Protein ARF-GAP DOMAIN 7</fullName>
        <shortName>AtAGD7</shortName>
    </alternativeName>
    <alternativeName>
        <fullName>Protein PDE1 SUPPRESSOR 1</fullName>
    </alternativeName>
</protein>
<dbReference type="EMBL" id="AB017876">
    <property type="protein sequence ID" value="BAA75744.1"/>
    <property type="molecule type" value="mRNA"/>
</dbReference>
<dbReference type="EMBL" id="AC004684">
    <property type="protein sequence ID" value="AAC23626.1"/>
    <property type="molecule type" value="Genomic_DNA"/>
</dbReference>
<dbReference type="EMBL" id="CP002685">
    <property type="protein sequence ID" value="AEC09414.1"/>
    <property type="molecule type" value="Genomic_DNA"/>
</dbReference>
<dbReference type="EMBL" id="CP002685">
    <property type="protein sequence ID" value="AEC09415.1"/>
    <property type="molecule type" value="Genomic_DNA"/>
</dbReference>
<dbReference type="EMBL" id="AY034983">
    <property type="protein sequence ID" value="AAK59488.1"/>
    <property type="molecule type" value="mRNA"/>
</dbReference>
<dbReference type="EMBL" id="AF436828">
    <property type="protein sequence ID" value="AAL32010.1"/>
    <property type="molecule type" value="mRNA"/>
</dbReference>
<dbReference type="EMBL" id="AY063077">
    <property type="protein sequence ID" value="AAL34251.1"/>
    <property type="molecule type" value="mRNA"/>
</dbReference>
<dbReference type="EMBL" id="AY103310">
    <property type="protein sequence ID" value="AAM65362.1"/>
    <property type="molecule type" value="mRNA"/>
</dbReference>
<dbReference type="PIR" id="T02521">
    <property type="entry name" value="T02521"/>
</dbReference>
<dbReference type="RefSeq" id="NP_001031503.1">
    <property type="nucleotide sequence ID" value="NM_001036426.1"/>
</dbReference>
<dbReference type="RefSeq" id="NP_181291.1">
    <property type="nucleotide sequence ID" value="NM_129310.3"/>
</dbReference>
<dbReference type="SMR" id="O80925"/>
<dbReference type="BioGRID" id="3675">
    <property type="interactions" value="2"/>
</dbReference>
<dbReference type="FunCoup" id="O80925">
    <property type="interactions" value="4225"/>
</dbReference>
<dbReference type="STRING" id="3702.O80925"/>
<dbReference type="iPTMnet" id="O80925"/>
<dbReference type="MetOSite" id="O80925"/>
<dbReference type="PaxDb" id="3702-AT2G37550.1"/>
<dbReference type="ProteomicsDB" id="244879"/>
<dbReference type="EnsemblPlants" id="AT2G37550.1">
    <property type="protein sequence ID" value="AT2G37550.1"/>
    <property type="gene ID" value="AT2G37550"/>
</dbReference>
<dbReference type="EnsemblPlants" id="AT2G37550.2">
    <property type="protein sequence ID" value="AT2G37550.2"/>
    <property type="gene ID" value="AT2G37550"/>
</dbReference>
<dbReference type="GeneID" id="818331"/>
<dbReference type="Gramene" id="AT2G37550.1">
    <property type="protein sequence ID" value="AT2G37550.1"/>
    <property type="gene ID" value="AT2G37550"/>
</dbReference>
<dbReference type="Gramene" id="AT2G37550.2">
    <property type="protein sequence ID" value="AT2G37550.2"/>
    <property type="gene ID" value="AT2G37550"/>
</dbReference>
<dbReference type="KEGG" id="ath:AT2G37550"/>
<dbReference type="Araport" id="AT2G37550"/>
<dbReference type="TAIR" id="AT2G37550">
    <property type="gene designation" value="AGD7"/>
</dbReference>
<dbReference type="eggNOG" id="KOG0704">
    <property type="taxonomic scope" value="Eukaryota"/>
</dbReference>
<dbReference type="HOGENOM" id="CLU_044516_1_0_1"/>
<dbReference type="InParanoid" id="O80925"/>
<dbReference type="OMA" id="GGWAGWD"/>
<dbReference type="OrthoDB" id="983479at2759"/>
<dbReference type="PhylomeDB" id="O80925"/>
<dbReference type="PRO" id="PR:O80925"/>
<dbReference type="Proteomes" id="UP000006548">
    <property type="component" value="Chromosome 2"/>
</dbReference>
<dbReference type="ExpressionAtlas" id="O80925">
    <property type="expression patterns" value="baseline and differential"/>
</dbReference>
<dbReference type="GO" id="GO:0005783">
    <property type="term" value="C:endoplasmic reticulum"/>
    <property type="evidence" value="ECO:0007005"/>
    <property type="project" value="TAIR"/>
</dbReference>
<dbReference type="GO" id="GO:0005794">
    <property type="term" value="C:Golgi apparatus"/>
    <property type="evidence" value="ECO:0007669"/>
    <property type="project" value="UniProtKB-SubCell"/>
</dbReference>
<dbReference type="GO" id="GO:0005096">
    <property type="term" value="F:GTPase activator activity"/>
    <property type="evidence" value="ECO:0007669"/>
    <property type="project" value="UniProtKB-KW"/>
</dbReference>
<dbReference type="GO" id="GO:0008270">
    <property type="term" value="F:zinc ion binding"/>
    <property type="evidence" value="ECO:0007669"/>
    <property type="project" value="UniProtKB-KW"/>
</dbReference>
<dbReference type="GO" id="GO:0016192">
    <property type="term" value="P:vesicle-mediated transport"/>
    <property type="evidence" value="ECO:0007669"/>
    <property type="project" value="UniProtKB-KW"/>
</dbReference>
<dbReference type="CDD" id="cd08830">
    <property type="entry name" value="ArfGap_ArfGap1"/>
    <property type="match status" value="1"/>
</dbReference>
<dbReference type="FunFam" id="1.10.220.150:FF:000014">
    <property type="entry name" value="ADP-ribosylation factor GTPase-activating protein"/>
    <property type="match status" value="1"/>
</dbReference>
<dbReference type="Gene3D" id="1.10.220.150">
    <property type="entry name" value="Arf GTPase activating protein"/>
    <property type="match status" value="1"/>
</dbReference>
<dbReference type="InterPro" id="IPR044519">
    <property type="entry name" value="ARF_GAP_AGD6/7"/>
</dbReference>
<dbReference type="InterPro" id="IPR037278">
    <property type="entry name" value="ARFGAP/RecO"/>
</dbReference>
<dbReference type="InterPro" id="IPR001164">
    <property type="entry name" value="ArfGAP_dom"/>
</dbReference>
<dbReference type="InterPro" id="IPR038508">
    <property type="entry name" value="ArfGAP_dom_sf"/>
</dbReference>
<dbReference type="PANTHER" id="PTHR47021">
    <property type="entry name" value="ADP-RIBOSYLATION FACTOR GTPASE-ACTIVATING PROTEIN AGD6-RELATED"/>
    <property type="match status" value="1"/>
</dbReference>
<dbReference type="PANTHER" id="PTHR47021:SF3">
    <property type="entry name" value="ADP-RIBOSYLATION FACTOR GTPASE-ACTIVATING PROTEIN AGD7"/>
    <property type="match status" value="1"/>
</dbReference>
<dbReference type="Pfam" id="PF01412">
    <property type="entry name" value="ArfGap"/>
    <property type="match status" value="1"/>
</dbReference>
<dbReference type="PRINTS" id="PR00405">
    <property type="entry name" value="REVINTRACTNG"/>
</dbReference>
<dbReference type="SMART" id="SM00105">
    <property type="entry name" value="ArfGap"/>
    <property type="match status" value="1"/>
</dbReference>
<dbReference type="SUPFAM" id="SSF57863">
    <property type="entry name" value="ArfGap/RecO-like zinc finger"/>
    <property type="match status" value="1"/>
</dbReference>
<dbReference type="PROSITE" id="PS50115">
    <property type="entry name" value="ARFGAP"/>
    <property type="match status" value="1"/>
</dbReference>
<evidence type="ECO:0000250" key="1">
    <source>
        <dbReference type="UniProtKB" id="Q9M354"/>
    </source>
</evidence>
<evidence type="ECO:0000255" key="2">
    <source>
        <dbReference type="PROSITE-ProRule" id="PRU00288"/>
    </source>
</evidence>
<evidence type="ECO:0000256" key="3">
    <source>
        <dbReference type="SAM" id="MobiDB-lite"/>
    </source>
</evidence>
<evidence type="ECO:0000269" key="4">
    <source>
    </source>
</evidence>
<evidence type="ECO:0000269" key="5">
    <source>
    </source>
</evidence>
<evidence type="ECO:0007744" key="6">
    <source>
    </source>
</evidence>
<name>AGD7_ARATH</name>
<reference key="1">
    <citation type="journal article" date="2001" name="DNA Res.">
        <title>Arabidopsis cDNA clones isolated by transcomplementation of the fission yeast cAMP phosphodiesterase mutant.</title>
        <authorList>
            <person name="Oshitani-Okamoto S."/>
            <person name="Kuromori T."/>
            <person name="Goto M."/>
            <person name="Yamamoto M."/>
        </authorList>
    </citation>
    <scope>NUCLEOTIDE SEQUENCE [MRNA]</scope>
    <scope>TISSUE SPECIFICITY</scope>
</reference>
<reference key="2">
    <citation type="journal article" date="1999" name="Nature">
        <title>Sequence and analysis of chromosome 2 of the plant Arabidopsis thaliana.</title>
        <authorList>
            <person name="Lin X."/>
            <person name="Kaul S."/>
            <person name="Rounsley S.D."/>
            <person name="Shea T.P."/>
            <person name="Benito M.-I."/>
            <person name="Town C.D."/>
            <person name="Fujii C.Y."/>
            <person name="Mason T.M."/>
            <person name="Bowman C.L."/>
            <person name="Barnstead M.E."/>
            <person name="Feldblyum T.V."/>
            <person name="Buell C.R."/>
            <person name="Ketchum K.A."/>
            <person name="Lee J.J."/>
            <person name="Ronning C.M."/>
            <person name="Koo H.L."/>
            <person name="Moffat K.S."/>
            <person name="Cronin L.A."/>
            <person name="Shen M."/>
            <person name="Pai G."/>
            <person name="Van Aken S."/>
            <person name="Umayam L."/>
            <person name="Tallon L.J."/>
            <person name="Gill J.E."/>
            <person name="Adams M.D."/>
            <person name="Carrera A.J."/>
            <person name="Creasy T.H."/>
            <person name="Goodman H.M."/>
            <person name="Somerville C.R."/>
            <person name="Copenhaver G.P."/>
            <person name="Preuss D."/>
            <person name="Nierman W.C."/>
            <person name="White O."/>
            <person name="Eisen J.A."/>
            <person name="Salzberg S.L."/>
            <person name="Fraser C.M."/>
            <person name="Venter J.C."/>
        </authorList>
    </citation>
    <scope>NUCLEOTIDE SEQUENCE [LARGE SCALE GENOMIC DNA]</scope>
    <source>
        <strain>cv. Columbia</strain>
    </source>
</reference>
<reference key="3">
    <citation type="journal article" date="2017" name="Plant J.">
        <title>Araport11: a complete reannotation of the Arabidopsis thaliana reference genome.</title>
        <authorList>
            <person name="Cheng C.Y."/>
            <person name="Krishnakumar V."/>
            <person name="Chan A.P."/>
            <person name="Thibaud-Nissen F."/>
            <person name="Schobel S."/>
            <person name="Town C.D."/>
        </authorList>
    </citation>
    <scope>GENOME REANNOTATION</scope>
    <source>
        <strain>cv. Columbia</strain>
    </source>
</reference>
<reference key="4">
    <citation type="journal article" date="2003" name="Science">
        <title>Empirical analysis of transcriptional activity in the Arabidopsis genome.</title>
        <authorList>
            <person name="Yamada K."/>
            <person name="Lim J."/>
            <person name="Dale J.M."/>
            <person name="Chen H."/>
            <person name="Shinn P."/>
            <person name="Palm C.J."/>
            <person name="Southwick A.M."/>
            <person name="Wu H.C."/>
            <person name="Kim C.J."/>
            <person name="Nguyen M."/>
            <person name="Pham P.K."/>
            <person name="Cheuk R.F."/>
            <person name="Karlin-Newmann G."/>
            <person name="Liu S.X."/>
            <person name="Lam B."/>
            <person name="Sakano H."/>
            <person name="Wu T."/>
            <person name="Yu G."/>
            <person name="Miranda M."/>
            <person name="Quach H.L."/>
            <person name="Tripp M."/>
            <person name="Chang C.H."/>
            <person name="Lee J.M."/>
            <person name="Toriumi M.J."/>
            <person name="Chan M.M."/>
            <person name="Tang C.C."/>
            <person name="Onodera C.S."/>
            <person name="Deng J.M."/>
            <person name="Akiyama K."/>
            <person name="Ansari Y."/>
            <person name="Arakawa T."/>
            <person name="Banh J."/>
            <person name="Banno F."/>
            <person name="Bowser L."/>
            <person name="Brooks S.Y."/>
            <person name="Carninci P."/>
            <person name="Chao Q."/>
            <person name="Choy N."/>
            <person name="Enju A."/>
            <person name="Goldsmith A.D."/>
            <person name="Gurjal M."/>
            <person name="Hansen N.F."/>
            <person name="Hayashizaki Y."/>
            <person name="Johnson-Hopson C."/>
            <person name="Hsuan V.W."/>
            <person name="Iida K."/>
            <person name="Karnes M."/>
            <person name="Khan S."/>
            <person name="Koesema E."/>
            <person name="Ishida J."/>
            <person name="Jiang P.X."/>
            <person name="Jones T."/>
            <person name="Kawai J."/>
            <person name="Kamiya A."/>
            <person name="Meyers C."/>
            <person name="Nakajima M."/>
            <person name="Narusaka M."/>
            <person name="Seki M."/>
            <person name="Sakurai T."/>
            <person name="Satou M."/>
            <person name="Tamse R."/>
            <person name="Vaysberg M."/>
            <person name="Wallender E.K."/>
            <person name="Wong C."/>
            <person name="Yamamura Y."/>
            <person name="Yuan S."/>
            <person name="Shinozaki K."/>
            <person name="Davis R.W."/>
            <person name="Theologis A."/>
            <person name="Ecker J.R."/>
        </authorList>
    </citation>
    <scope>NUCLEOTIDE SEQUENCE [LARGE SCALE MRNA]</scope>
    <source>
        <strain>cv. Columbia</strain>
    </source>
</reference>
<reference key="5">
    <citation type="journal article" date="2007" name="Plant Physiol.">
        <title>Overexpression of Arabidopsis AGD7 causes relocation of Golgi-localized proteins to the endoplasmic reticulum and inhibits protein trafficking in plant cells.</title>
        <authorList>
            <person name="Min M.K."/>
            <person name="Kim S.J."/>
            <person name="Miao Y."/>
            <person name="Shin J."/>
            <person name="Jiang L."/>
            <person name="Hwang I."/>
        </authorList>
    </citation>
    <scope>FUNCTION</scope>
    <scope>INTERACTION WITH ARF1</scope>
    <scope>ACTIVITY REGULATION</scope>
    <scope>SUBCELLULAR LOCATION</scope>
</reference>
<reference key="6">
    <citation type="journal article" date="2003" name="Plant Physiol.">
        <title>Analysis of the small GTPase gene superfamily of Arabidopsis.</title>
        <authorList>
            <person name="Vernoud V."/>
            <person name="Horton A.C."/>
            <person name="Yang Z."/>
            <person name="Nielsen E."/>
        </authorList>
    </citation>
    <scope>GENE FAMILY</scope>
    <scope>NOMENCLATURE</scope>
</reference>
<reference key="7">
    <citation type="journal article" date="2008" name="J. Proteome Res.">
        <title>Site-specific phosphorylation profiling of Arabidopsis proteins by mass spectrometry and peptide chip analysis.</title>
        <authorList>
            <person name="de la Fuente van Bentem S."/>
            <person name="Anrather D."/>
            <person name="Dohnal I."/>
            <person name="Roitinger E."/>
            <person name="Csaszar E."/>
            <person name="Joore J."/>
            <person name="Buijnink J."/>
            <person name="Carreri A."/>
            <person name="Forzani C."/>
            <person name="Lorkovic Z.J."/>
            <person name="Barta A."/>
            <person name="Lecourieux D."/>
            <person name="Verhounig A."/>
            <person name="Jonak C."/>
            <person name="Hirt H."/>
        </authorList>
    </citation>
    <scope>PHOSPHORYLATION [LARGE SCALE ANALYSIS] AT SER-191</scope>
    <scope>IDENTIFICATION BY MASS SPECTROMETRY [LARGE SCALE ANALYSIS]</scope>
    <source>
        <tissue>Root</tissue>
    </source>
</reference>
<reference key="8">
    <citation type="journal article" date="2009" name="Plant Physiol.">
        <title>Large-scale Arabidopsis phosphoproteome profiling reveals novel chloroplast kinase substrates and phosphorylation networks.</title>
        <authorList>
            <person name="Reiland S."/>
            <person name="Messerli G."/>
            <person name="Baerenfaller K."/>
            <person name="Gerrits B."/>
            <person name="Endler A."/>
            <person name="Grossmann J."/>
            <person name="Gruissem W."/>
            <person name="Baginsky S."/>
        </authorList>
    </citation>
    <scope>IDENTIFICATION BY MASS SPECTROMETRY [LARGE SCALE ANALYSIS]</scope>
</reference>
<gene>
    <name type="primary">AGD7</name>
    <name type="synonym">ASP1</name>
    <name type="ordered locus">At2g37550</name>
    <name type="ORF">F13M22.5</name>
</gene>
<proteinExistence type="evidence at protein level"/>
<feature type="chain" id="PRO_0000352499" description="ADP-ribosylation factor GTPase-activating protein AGD7">
    <location>
        <begin position="1"/>
        <end position="456"/>
    </location>
</feature>
<feature type="domain" description="Arf-GAP" evidence="2">
    <location>
        <begin position="4"/>
        <end position="120"/>
    </location>
</feature>
<feature type="zinc finger region" description="C4-type" evidence="2">
    <location>
        <begin position="19"/>
        <end position="42"/>
    </location>
</feature>
<feature type="region of interest" description="Disordered" evidence="3">
    <location>
        <begin position="122"/>
        <end position="200"/>
    </location>
</feature>
<feature type="region of interest" description="Disordered" evidence="3">
    <location>
        <begin position="216"/>
        <end position="257"/>
    </location>
</feature>
<feature type="region of interest" description="Disordered" evidence="3">
    <location>
        <begin position="337"/>
        <end position="456"/>
    </location>
</feature>
<feature type="compositionally biased region" description="Gly residues" evidence="3">
    <location>
        <begin position="143"/>
        <end position="153"/>
    </location>
</feature>
<feature type="compositionally biased region" description="Basic and acidic residues" evidence="3">
    <location>
        <begin position="161"/>
        <end position="170"/>
    </location>
</feature>
<feature type="compositionally biased region" description="Polar residues" evidence="3">
    <location>
        <begin position="340"/>
        <end position="364"/>
    </location>
</feature>
<feature type="compositionally biased region" description="Low complexity" evidence="3">
    <location>
        <begin position="365"/>
        <end position="387"/>
    </location>
</feature>
<feature type="compositionally biased region" description="Acidic residues" evidence="3">
    <location>
        <begin position="409"/>
        <end position="426"/>
    </location>
</feature>
<feature type="modified residue" description="Phosphoserine" evidence="1">
    <location>
        <position position="173"/>
    </location>
</feature>
<feature type="modified residue" description="Phosphoserine" evidence="6">
    <location>
        <position position="191"/>
    </location>
</feature>
<keyword id="KW-0931">ER-Golgi transport</keyword>
<keyword id="KW-0333">Golgi apparatus</keyword>
<keyword id="KW-0343">GTPase activation</keyword>
<keyword id="KW-0479">Metal-binding</keyword>
<keyword id="KW-0597">Phosphoprotein</keyword>
<keyword id="KW-1185">Reference proteome</keyword>
<keyword id="KW-0813">Transport</keyword>
<keyword id="KW-0862">Zinc</keyword>
<keyword id="KW-0863">Zinc-finger</keyword>
<organism>
    <name type="scientific">Arabidopsis thaliana</name>
    <name type="common">Mouse-ear cress</name>
    <dbReference type="NCBI Taxonomy" id="3702"/>
    <lineage>
        <taxon>Eukaryota</taxon>
        <taxon>Viridiplantae</taxon>
        <taxon>Streptophyta</taxon>
        <taxon>Embryophyta</taxon>
        <taxon>Tracheophyta</taxon>
        <taxon>Spermatophyta</taxon>
        <taxon>Magnoliopsida</taxon>
        <taxon>eudicotyledons</taxon>
        <taxon>Gunneridae</taxon>
        <taxon>Pentapetalae</taxon>
        <taxon>rosids</taxon>
        <taxon>malvids</taxon>
        <taxon>Brassicales</taxon>
        <taxon>Brassicaceae</taxon>
        <taxon>Camelineae</taxon>
        <taxon>Arabidopsis</taxon>
    </lineage>
</organism>
<sequence>MAAARRLRTLQSQPENKVCVDCSQKNPQWASISYGIFMCLECSGKHRGLGVHISFVRSVTMDSWSEIQIKKMDAGGNERLNNFLAQYGISKETDIISKYNSNAASVYRDRIQALAEGRQWRDPPIVKESVGGGLMNKKPPLSQGGGRDSGNGGWDNWDNDDSFRSTDMRRNQSAGDFRSSGGRGAPAKSKSSEDIYSRSQLEASAANKESFFAKRMAENESKPEGLPPSQGGKYVGFGSSPGPAPRSNQQSGGGDVFSVMSEGFGRLSLVAASAANVVQTGTMEFTSKVKEGGLDQTVSETVNVVASKTTEIGQRTWGIMKGVMAIASQKVEEFTKEEASTWNQQNKTEGNGYYQNSGIGNKTANSSFGGSQSSSSGHNNSYRNSNSWDDWGEENNSKKEAAPKVSTSNDDDDGGWAGWDDNDAKDDDFYYQPASDKKSVGHNGKSDTAWTGGGFL</sequence>
<accession>O80925</accession>
<comment type="function">
    <text evidence="5">GTPase-activating protein (GAP) for ADP ribosylation factor (ARF). Involved in protein trafficking by controlling ARF1 activity; may participate in COPI vesicle formation at the Golgi complex.</text>
</comment>
<comment type="activity regulation">
    <text evidence="5">Activated by binding to phosphatidic acid.</text>
</comment>
<comment type="subunit">
    <text evidence="5">Interacts with ARF1.</text>
</comment>
<comment type="subcellular location">
    <subcellularLocation>
        <location evidence="5">Golgi apparatus</location>
    </subcellularLocation>
</comment>
<comment type="tissue specificity">
    <text evidence="4">Expressed in leaves, stems, flower buds and flowers.</text>
</comment>
<comment type="miscellaneous">
    <text>Plants overexpressing AGD7 show a relocation of proteins from the Golgi complex to the endoplasmic reticulum.</text>
</comment>